<proteinExistence type="inferred from homology"/>
<accession>P64002</accession>
<accession>Q99TE6</accession>
<dbReference type="EMBL" id="BA000017">
    <property type="protein sequence ID" value="BAB57879.1"/>
    <property type="molecule type" value="Genomic_DNA"/>
</dbReference>
<dbReference type="RefSeq" id="WP_000244866.1">
    <property type="nucleotide sequence ID" value="NC_002758.2"/>
</dbReference>
<dbReference type="SMR" id="P64002"/>
<dbReference type="KEGG" id="sav:SAV1717"/>
<dbReference type="HOGENOM" id="CLU_034079_1_0_9"/>
<dbReference type="PhylomeDB" id="P64002"/>
<dbReference type="Proteomes" id="UP000002481">
    <property type="component" value="Chromosome"/>
</dbReference>
<dbReference type="GO" id="GO:0005886">
    <property type="term" value="C:plasma membrane"/>
    <property type="evidence" value="ECO:0007669"/>
    <property type="project" value="UniProtKB-SubCell"/>
</dbReference>
<dbReference type="GO" id="GO:0005940">
    <property type="term" value="C:septin ring"/>
    <property type="evidence" value="ECO:0007669"/>
    <property type="project" value="InterPro"/>
</dbReference>
<dbReference type="GO" id="GO:0000917">
    <property type="term" value="P:division septum assembly"/>
    <property type="evidence" value="ECO:0007669"/>
    <property type="project" value="UniProtKB-KW"/>
</dbReference>
<dbReference type="GO" id="GO:0000921">
    <property type="term" value="P:septin ring assembly"/>
    <property type="evidence" value="ECO:0007669"/>
    <property type="project" value="InterPro"/>
</dbReference>
<dbReference type="HAMAP" id="MF_00728">
    <property type="entry name" value="EzrA"/>
    <property type="match status" value="1"/>
</dbReference>
<dbReference type="InterPro" id="IPR010379">
    <property type="entry name" value="EzrA"/>
</dbReference>
<dbReference type="NCBIfam" id="NF003412">
    <property type="entry name" value="PRK04778.1-6"/>
    <property type="match status" value="1"/>
</dbReference>
<dbReference type="Pfam" id="PF06160">
    <property type="entry name" value="EzrA"/>
    <property type="match status" value="1"/>
</dbReference>
<comment type="function">
    <text evidence="1">Negative regulator of FtsZ ring formation; modulates the frequency and position of FtsZ ring formation. Inhibits FtsZ ring formation at polar sites. Interacts either with FtsZ or with one of its binding partners to promote depolymerization.</text>
</comment>
<comment type="subcellular location">
    <subcellularLocation>
        <location>Cell membrane</location>
        <topology>Single-pass membrane protein</topology>
    </subcellularLocation>
    <text evidence="1">Colocalized with FtsZ to the nascent septal site.</text>
</comment>
<comment type="similarity">
    <text evidence="1">Belongs to the EzrA family.</text>
</comment>
<organism>
    <name type="scientific">Staphylococcus aureus (strain Mu50 / ATCC 700699)</name>
    <dbReference type="NCBI Taxonomy" id="158878"/>
    <lineage>
        <taxon>Bacteria</taxon>
        <taxon>Bacillati</taxon>
        <taxon>Bacillota</taxon>
        <taxon>Bacilli</taxon>
        <taxon>Bacillales</taxon>
        <taxon>Staphylococcaceae</taxon>
        <taxon>Staphylococcus</taxon>
    </lineage>
</organism>
<gene>
    <name evidence="1" type="primary">ezrA</name>
    <name type="ordered locus">SAV1717</name>
</gene>
<evidence type="ECO:0000255" key="1">
    <source>
        <dbReference type="HAMAP-Rule" id="MF_00728"/>
    </source>
</evidence>
<sequence length="564" mass="66228">MVLYIILAIIVIILIAVGVLFYLRSNKRQIIEKAIERKNEIETLPFDQNLAQLSKLNLKGETKTKYDAMKKDNVESTNKYLAPVEEKIHNAEALLDKFSFNASQSEIDDANELMDSYEQSYQQQLEDVNEIIALYKDNDELYDKCKVDYREMKRDVLANRHQFGEAASLLETEIEKFEPRLEQYEVLKADGNYVQAHNHIAALNEQMKQLRSYMEEIPELIRETQKELPGQFQDLKYGCRDLKVEGYDLDHVKVDSTLQSLKTELSFVEPLISRLELEEANDKLANINDKLDDMYDLIEHEVKAKNDVEETKDIITDNLFKAKDMNYTLQTEIEYVRENYYINESDAQSVRQFENEIQSLISVYDDILKEMSKSAVRYSEVQDNLQYLEDHVTVINDKQEKLQNHLIQLREDEAEAEDNLLRVQSKKEEVYRRLLASNLTSVPERFIIMKNEIDHEVRDVNEQFSERPIHVKQLKDKVSKIVIQMNTFEDEANDVLVNAVYAEKLIQYGNRYRKDYSNVDKSLNEAERLFKNNRYKRAIEIAEQVLESVEPGVTKHIEEEVIKQ</sequence>
<keyword id="KW-0131">Cell cycle</keyword>
<keyword id="KW-0132">Cell division</keyword>
<keyword id="KW-1003">Cell membrane</keyword>
<keyword id="KW-0175">Coiled coil</keyword>
<keyword id="KW-0472">Membrane</keyword>
<keyword id="KW-0717">Septation</keyword>
<keyword id="KW-0812">Transmembrane</keyword>
<keyword id="KW-1133">Transmembrane helix</keyword>
<protein>
    <recommendedName>
        <fullName evidence="1">Septation ring formation regulator EzrA</fullName>
    </recommendedName>
</protein>
<name>EZRA_STAAM</name>
<feature type="chain" id="PRO_0000172879" description="Septation ring formation regulator EzrA">
    <location>
        <begin position="1"/>
        <end position="564"/>
    </location>
</feature>
<feature type="topological domain" description="Extracellular" evidence="1">
    <location>
        <begin position="1"/>
        <end position="4"/>
    </location>
</feature>
<feature type="transmembrane region" description="Helical" evidence="1">
    <location>
        <begin position="5"/>
        <end position="23"/>
    </location>
</feature>
<feature type="topological domain" description="Cytoplasmic" evidence="1">
    <location>
        <begin position="24"/>
        <end position="564"/>
    </location>
</feature>
<feature type="coiled-coil region" evidence="1">
    <location>
        <begin position="99"/>
        <end position="138"/>
    </location>
</feature>
<feature type="coiled-coil region" evidence="1">
    <location>
        <begin position="190"/>
        <end position="223"/>
    </location>
</feature>
<feature type="coiled-coil region" evidence="1">
    <location>
        <begin position="271"/>
        <end position="300"/>
    </location>
</feature>
<feature type="coiled-coil region" evidence="1">
    <location>
        <begin position="350"/>
        <end position="435"/>
    </location>
</feature>
<feature type="coiled-coil region" evidence="1">
    <location>
        <begin position="471"/>
        <end position="550"/>
    </location>
</feature>
<reference key="1">
    <citation type="journal article" date="2001" name="Lancet">
        <title>Whole genome sequencing of meticillin-resistant Staphylococcus aureus.</title>
        <authorList>
            <person name="Kuroda M."/>
            <person name="Ohta T."/>
            <person name="Uchiyama I."/>
            <person name="Baba T."/>
            <person name="Yuzawa H."/>
            <person name="Kobayashi I."/>
            <person name="Cui L."/>
            <person name="Oguchi A."/>
            <person name="Aoki K."/>
            <person name="Nagai Y."/>
            <person name="Lian J.-Q."/>
            <person name="Ito T."/>
            <person name="Kanamori M."/>
            <person name="Matsumaru H."/>
            <person name="Maruyama A."/>
            <person name="Murakami H."/>
            <person name="Hosoyama A."/>
            <person name="Mizutani-Ui Y."/>
            <person name="Takahashi N.K."/>
            <person name="Sawano T."/>
            <person name="Inoue R."/>
            <person name="Kaito C."/>
            <person name="Sekimizu K."/>
            <person name="Hirakawa H."/>
            <person name="Kuhara S."/>
            <person name="Goto S."/>
            <person name="Yabuzaki J."/>
            <person name="Kanehisa M."/>
            <person name="Yamashita A."/>
            <person name="Oshima K."/>
            <person name="Furuya K."/>
            <person name="Yoshino C."/>
            <person name="Shiba T."/>
            <person name="Hattori M."/>
            <person name="Ogasawara N."/>
            <person name="Hayashi H."/>
            <person name="Hiramatsu K."/>
        </authorList>
    </citation>
    <scope>NUCLEOTIDE SEQUENCE [LARGE SCALE GENOMIC DNA]</scope>
    <source>
        <strain>Mu50 / ATCC 700699</strain>
    </source>
</reference>